<protein>
    <recommendedName>
        <fullName evidence="1">Biosynthetic peptidoglycan transglycosylase</fullName>
        <ecNumber evidence="1">2.4.99.28</ecNumber>
    </recommendedName>
    <alternativeName>
        <fullName evidence="1">Glycan polymerase</fullName>
    </alternativeName>
    <alternativeName>
        <fullName evidence="1">Peptidoglycan glycosyltransferase MtgA</fullName>
        <shortName evidence="1">PGT</shortName>
    </alternativeName>
</protein>
<organism>
    <name type="scientific">Mannheimia succiniciproducens (strain KCTC 0769BP / MBEL55E)</name>
    <dbReference type="NCBI Taxonomy" id="221988"/>
    <lineage>
        <taxon>Bacteria</taxon>
        <taxon>Pseudomonadati</taxon>
        <taxon>Pseudomonadota</taxon>
        <taxon>Gammaproteobacteria</taxon>
        <taxon>Pasteurellales</taxon>
        <taxon>Pasteurellaceae</taxon>
        <taxon>Basfia</taxon>
    </lineage>
</organism>
<proteinExistence type="inferred from homology"/>
<sequence>MRLKTLKFPFVNKKNTRTFKKKCGRFLSYFIGLTVALTFLFRFVPIPFSAYMAEQKLAHIIQLDFDYKVNYDWISLEDISPYMQLAVIAAEDQNFPNHGGFDWNAIKSAIKYNEKSSRIRGASTISQQTAKNMFLWHGQSWIRKGIEVPVTFMLETLWSKKRILEVYLNIAEFGNGIFGVEAASRYYFKKPAKRLTQSEAALLAAVLPNPIIYKANRPSLLVRKKQAWIIRQMNSLGLNYLKKL</sequence>
<dbReference type="EC" id="2.4.99.28" evidence="1"/>
<dbReference type="EMBL" id="AE016827">
    <property type="protein sequence ID" value="AAU38174.1"/>
    <property type="molecule type" value="Genomic_DNA"/>
</dbReference>
<dbReference type="RefSeq" id="WP_011200739.1">
    <property type="nucleotide sequence ID" value="NC_006300.1"/>
</dbReference>
<dbReference type="SMR" id="Q65S86"/>
<dbReference type="STRING" id="221988.MS1567"/>
<dbReference type="CAZy" id="GT51">
    <property type="family name" value="Glycosyltransferase Family 51"/>
</dbReference>
<dbReference type="KEGG" id="msu:MS1567"/>
<dbReference type="eggNOG" id="COG0744">
    <property type="taxonomic scope" value="Bacteria"/>
</dbReference>
<dbReference type="HOGENOM" id="CLU_006354_1_1_6"/>
<dbReference type="OrthoDB" id="9766909at2"/>
<dbReference type="UniPathway" id="UPA00219"/>
<dbReference type="Proteomes" id="UP000000607">
    <property type="component" value="Chromosome"/>
</dbReference>
<dbReference type="GO" id="GO:0009274">
    <property type="term" value="C:peptidoglycan-based cell wall"/>
    <property type="evidence" value="ECO:0007669"/>
    <property type="project" value="InterPro"/>
</dbReference>
<dbReference type="GO" id="GO:0005886">
    <property type="term" value="C:plasma membrane"/>
    <property type="evidence" value="ECO:0007669"/>
    <property type="project" value="UniProtKB-SubCell"/>
</dbReference>
<dbReference type="GO" id="GO:0016763">
    <property type="term" value="F:pentosyltransferase activity"/>
    <property type="evidence" value="ECO:0007669"/>
    <property type="project" value="InterPro"/>
</dbReference>
<dbReference type="GO" id="GO:0008955">
    <property type="term" value="F:peptidoglycan glycosyltransferase activity"/>
    <property type="evidence" value="ECO:0007669"/>
    <property type="project" value="UniProtKB-UniRule"/>
</dbReference>
<dbReference type="GO" id="GO:0071555">
    <property type="term" value="P:cell wall organization"/>
    <property type="evidence" value="ECO:0007669"/>
    <property type="project" value="UniProtKB-KW"/>
</dbReference>
<dbReference type="GO" id="GO:0009252">
    <property type="term" value="P:peptidoglycan biosynthetic process"/>
    <property type="evidence" value="ECO:0007669"/>
    <property type="project" value="UniProtKB-UniRule"/>
</dbReference>
<dbReference type="GO" id="GO:0008360">
    <property type="term" value="P:regulation of cell shape"/>
    <property type="evidence" value="ECO:0007669"/>
    <property type="project" value="UniProtKB-KW"/>
</dbReference>
<dbReference type="Gene3D" id="1.10.3810.10">
    <property type="entry name" value="Biosynthetic peptidoglycan transglycosylase-like"/>
    <property type="match status" value="1"/>
</dbReference>
<dbReference type="HAMAP" id="MF_00766">
    <property type="entry name" value="PGT_MtgA"/>
    <property type="match status" value="1"/>
</dbReference>
<dbReference type="InterPro" id="IPR001264">
    <property type="entry name" value="Glyco_trans_51"/>
</dbReference>
<dbReference type="InterPro" id="IPR023346">
    <property type="entry name" value="Lysozyme-like_dom_sf"/>
</dbReference>
<dbReference type="InterPro" id="IPR036950">
    <property type="entry name" value="PBP_transglycosylase"/>
</dbReference>
<dbReference type="InterPro" id="IPR011812">
    <property type="entry name" value="Pep_trsgly"/>
</dbReference>
<dbReference type="NCBIfam" id="TIGR02070">
    <property type="entry name" value="mono_pep_trsgly"/>
    <property type="match status" value="1"/>
</dbReference>
<dbReference type="PANTHER" id="PTHR30400:SF0">
    <property type="entry name" value="BIOSYNTHETIC PEPTIDOGLYCAN TRANSGLYCOSYLASE"/>
    <property type="match status" value="1"/>
</dbReference>
<dbReference type="PANTHER" id="PTHR30400">
    <property type="entry name" value="MONOFUNCTIONAL BIOSYNTHETIC PEPTIDOGLYCAN TRANSGLYCOSYLASE"/>
    <property type="match status" value="1"/>
</dbReference>
<dbReference type="Pfam" id="PF00912">
    <property type="entry name" value="Transgly"/>
    <property type="match status" value="1"/>
</dbReference>
<dbReference type="SUPFAM" id="SSF53955">
    <property type="entry name" value="Lysozyme-like"/>
    <property type="match status" value="1"/>
</dbReference>
<comment type="function">
    <text evidence="1">Peptidoglycan polymerase that catalyzes glycan chain elongation from lipid-linked precursors.</text>
</comment>
<comment type="catalytic activity">
    <reaction evidence="1">
        <text>[GlcNAc-(1-&gt;4)-Mur2Ac(oyl-L-Ala-gamma-D-Glu-L-Lys-D-Ala-D-Ala)](n)-di-trans,octa-cis-undecaprenyl diphosphate + beta-D-GlcNAc-(1-&gt;4)-Mur2Ac(oyl-L-Ala-gamma-D-Glu-L-Lys-D-Ala-D-Ala)-di-trans,octa-cis-undecaprenyl diphosphate = [GlcNAc-(1-&gt;4)-Mur2Ac(oyl-L-Ala-gamma-D-Glu-L-Lys-D-Ala-D-Ala)](n+1)-di-trans,octa-cis-undecaprenyl diphosphate + di-trans,octa-cis-undecaprenyl diphosphate + H(+)</text>
        <dbReference type="Rhea" id="RHEA:23708"/>
        <dbReference type="Rhea" id="RHEA-COMP:9602"/>
        <dbReference type="Rhea" id="RHEA-COMP:9603"/>
        <dbReference type="ChEBI" id="CHEBI:15378"/>
        <dbReference type="ChEBI" id="CHEBI:58405"/>
        <dbReference type="ChEBI" id="CHEBI:60033"/>
        <dbReference type="ChEBI" id="CHEBI:78435"/>
        <dbReference type="EC" id="2.4.99.28"/>
    </reaction>
</comment>
<comment type="pathway">
    <text evidence="1">Cell wall biogenesis; peptidoglycan biosynthesis.</text>
</comment>
<comment type="subcellular location">
    <subcellularLocation>
        <location evidence="1">Cell inner membrane</location>
        <topology evidence="1">Single-pass membrane protein</topology>
    </subcellularLocation>
</comment>
<comment type="similarity">
    <text evidence="1">Belongs to the glycosyltransferase 51 family.</text>
</comment>
<reference key="1">
    <citation type="journal article" date="2004" name="Nat. Biotechnol.">
        <title>The genome sequence of the capnophilic rumen bacterium Mannheimia succiniciproducens.</title>
        <authorList>
            <person name="Hong S.H."/>
            <person name="Kim J.S."/>
            <person name="Lee S.Y."/>
            <person name="In Y.H."/>
            <person name="Choi S.S."/>
            <person name="Rih J.-K."/>
            <person name="Kim C.H."/>
            <person name="Jeong H."/>
            <person name="Hur C.G."/>
            <person name="Kim J.J."/>
        </authorList>
    </citation>
    <scope>NUCLEOTIDE SEQUENCE [LARGE SCALE GENOMIC DNA]</scope>
    <source>
        <strain>KCTC 0769BP / MBEL55E</strain>
    </source>
</reference>
<gene>
    <name evidence="1" type="primary">mtgA</name>
    <name type="ordered locus">MS1567</name>
</gene>
<keyword id="KW-0997">Cell inner membrane</keyword>
<keyword id="KW-1003">Cell membrane</keyword>
<keyword id="KW-0133">Cell shape</keyword>
<keyword id="KW-0961">Cell wall biogenesis/degradation</keyword>
<keyword id="KW-0328">Glycosyltransferase</keyword>
<keyword id="KW-0472">Membrane</keyword>
<keyword id="KW-0573">Peptidoglycan synthesis</keyword>
<keyword id="KW-0808">Transferase</keyword>
<keyword id="KW-0812">Transmembrane</keyword>
<keyword id="KW-1133">Transmembrane helix</keyword>
<accession>Q65S86</accession>
<name>MTGA_MANSM</name>
<evidence type="ECO:0000255" key="1">
    <source>
        <dbReference type="HAMAP-Rule" id="MF_00766"/>
    </source>
</evidence>
<feature type="chain" id="PRO_0000257672" description="Biosynthetic peptidoglycan transglycosylase">
    <location>
        <begin position="1"/>
        <end position="244"/>
    </location>
</feature>
<feature type="transmembrane region" description="Helical" evidence="1">
    <location>
        <begin position="26"/>
        <end position="46"/>
    </location>
</feature>